<accession>C3LU31</accession>
<protein>
    <recommendedName>
        <fullName evidence="1">Histidinol-phosphate aminotransferase</fullName>
        <ecNumber evidence="1">2.6.1.9</ecNumber>
    </recommendedName>
    <alternativeName>
        <fullName evidence="1">Imidazole acetol-phosphate transaminase</fullName>
    </alternativeName>
</protein>
<reference key="1">
    <citation type="journal article" date="2008" name="PLoS ONE">
        <title>A recalibrated molecular clock and independent origins for the cholera pandemic clones.</title>
        <authorList>
            <person name="Feng L."/>
            <person name="Reeves P.R."/>
            <person name="Lan R."/>
            <person name="Ren Y."/>
            <person name="Gao C."/>
            <person name="Zhou Z."/>
            <person name="Ren Y."/>
            <person name="Cheng J."/>
            <person name="Wang W."/>
            <person name="Wang J."/>
            <person name="Qian W."/>
            <person name="Li D."/>
            <person name="Wang L."/>
        </authorList>
    </citation>
    <scope>NUCLEOTIDE SEQUENCE [LARGE SCALE GENOMIC DNA]</scope>
    <source>
        <strain>M66-2</strain>
    </source>
</reference>
<feature type="chain" id="PRO_1000149115" description="Histidinol-phosphate aminotransferase">
    <location>
        <begin position="1"/>
        <end position="346"/>
    </location>
</feature>
<feature type="modified residue" description="N6-(pyridoxal phosphate)lysine" evidence="1">
    <location>
        <position position="209"/>
    </location>
</feature>
<dbReference type="EC" id="2.6.1.9" evidence="1"/>
<dbReference type="EMBL" id="CP001233">
    <property type="protein sequence ID" value="ACP05407.1"/>
    <property type="molecule type" value="Genomic_DNA"/>
</dbReference>
<dbReference type="RefSeq" id="WP_000412889.1">
    <property type="nucleotide sequence ID" value="NC_012578.1"/>
</dbReference>
<dbReference type="SMR" id="C3LU31"/>
<dbReference type="KEGG" id="vcm:VCM66_1090"/>
<dbReference type="HOGENOM" id="CLU_017584_3_1_6"/>
<dbReference type="UniPathway" id="UPA00031">
    <property type="reaction ID" value="UER00012"/>
</dbReference>
<dbReference type="Proteomes" id="UP000001217">
    <property type="component" value="Chromosome I"/>
</dbReference>
<dbReference type="GO" id="GO:0004400">
    <property type="term" value="F:histidinol-phosphate transaminase activity"/>
    <property type="evidence" value="ECO:0007669"/>
    <property type="project" value="UniProtKB-UniRule"/>
</dbReference>
<dbReference type="GO" id="GO:0030170">
    <property type="term" value="F:pyridoxal phosphate binding"/>
    <property type="evidence" value="ECO:0007669"/>
    <property type="project" value="InterPro"/>
</dbReference>
<dbReference type="GO" id="GO:0000105">
    <property type="term" value="P:L-histidine biosynthetic process"/>
    <property type="evidence" value="ECO:0007669"/>
    <property type="project" value="UniProtKB-UniRule"/>
</dbReference>
<dbReference type="CDD" id="cd00609">
    <property type="entry name" value="AAT_like"/>
    <property type="match status" value="1"/>
</dbReference>
<dbReference type="FunFam" id="3.40.640.10:FF:000032">
    <property type="entry name" value="Histidinol-phosphate aminotransferase"/>
    <property type="match status" value="1"/>
</dbReference>
<dbReference type="Gene3D" id="3.90.1150.10">
    <property type="entry name" value="Aspartate Aminotransferase, domain 1"/>
    <property type="match status" value="1"/>
</dbReference>
<dbReference type="Gene3D" id="3.40.640.10">
    <property type="entry name" value="Type I PLP-dependent aspartate aminotransferase-like (Major domain)"/>
    <property type="match status" value="1"/>
</dbReference>
<dbReference type="HAMAP" id="MF_01023">
    <property type="entry name" value="HisC_aminotrans_2"/>
    <property type="match status" value="1"/>
</dbReference>
<dbReference type="InterPro" id="IPR001917">
    <property type="entry name" value="Aminotrans_II_pyridoxalP_BS"/>
</dbReference>
<dbReference type="InterPro" id="IPR004839">
    <property type="entry name" value="Aminotransferase_I/II_large"/>
</dbReference>
<dbReference type="InterPro" id="IPR005861">
    <property type="entry name" value="HisP_aminotrans"/>
</dbReference>
<dbReference type="InterPro" id="IPR015424">
    <property type="entry name" value="PyrdxlP-dep_Trfase"/>
</dbReference>
<dbReference type="InterPro" id="IPR015421">
    <property type="entry name" value="PyrdxlP-dep_Trfase_major"/>
</dbReference>
<dbReference type="InterPro" id="IPR015422">
    <property type="entry name" value="PyrdxlP-dep_Trfase_small"/>
</dbReference>
<dbReference type="NCBIfam" id="TIGR01141">
    <property type="entry name" value="hisC"/>
    <property type="match status" value="1"/>
</dbReference>
<dbReference type="PANTHER" id="PTHR42885:SF2">
    <property type="entry name" value="HISTIDINOL-PHOSPHATE AMINOTRANSFERASE"/>
    <property type="match status" value="1"/>
</dbReference>
<dbReference type="PANTHER" id="PTHR42885">
    <property type="entry name" value="HISTIDINOL-PHOSPHATE AMINOTRANSFERASE-RELATED"/>
    <property type="match status" value="1"/>
</dbReference>
<dbReference type="Pfam" id="PF00155">
    <property type="entry name" value="Aminotran_1_2"/>
    <property type="match status" value="1"/>
</dbReference>
<dbReference type="SUPFAM" id="SSF53383">
    <property type="entry name" value="PLP-dependent transferases"/>
    <property type="match status" value="1"/>
</dbReference>
<dbReference type="PROSITE" id="PS00599">
    <property type="entry name" value="AA_TRANSFER_CLASS_2"/>
    <property type="match status" value="1"/>
</dbReference>
<name>HIS8_VIBCM</name>
<evidence type="ECO:0000255" key="1">
    <source>
        <dbReference type="HAMAP-Rule" id="MF_01023"/>
    </source>
</evidence>
<keyword id="KW-0028">Amino-acid biosynthesis</keyword>
<keyword id="KW-0032">Aminotransferase</keyword>
<keyword id="KW-0368">Histidine biosynthesis</keyword>
<keyword id="KW-0663">Pyridoxal phosphate</keyword>
<keyword id="KW-0808">Transferase</keyword>
<comment type="catalytic activity">
    <reaction evidence="1">
        <text>L-histidinol phosphate + 2-oxoglutarate = 3-(imidazol-4-yl)-2-oxopropyl phosphate + L-glutamate</text>
        <dbReference type="Rhea" id="RHEA:23744"/>
        <dbReference type="ChEBI" id="CHEBI:16810"/>
        <dbReference type="ChEBI" id="CHEBI:29985"/>
        <dbReference type="ChEBI" id="CHEBI:57766"/>
        <dbReference type="ChEBI" id="CHEBI:57980"/>
        <dbReference type="EC" id="2.6.1.9"/>
    </reaction>
</comment>
<comment type="cofactor">
    <cofactor evidence="1">
        <name>pyridoxal 5'-phosphate</name>
        <dbReference type="ChEBI" id="CHEBI:597326"/>
    </cofactor>
</comment>
<comment type="pathway">
    <text evidence="1">Amino-acid biosynthesis; L-histidine biosynthesis; L-histidine from 5-phospho-alpha-D-ribose 1-diphosphate: step 7/9.</text>
</comment>
<comment type="subunit">
    <text evidence="1">Homodimer.</text>
</comment>
<comment type="similarity">
    <text evidence="1">Belongs to the class-II pyridoxal-phosphate-dependent aminotransferase family. Histidinol-phosphate aminotransferase subfamily.</text>
</comment>
<sequence>MEKLARQQIQALTPYLSARRIGGSGDVWLNANESPFNNEYKTDFARLNRYSDCQPKAMIQAYANYAGVQPEQVLTSRGADEGIELLIRAFCEPNQDAILFCPPTYGMYAISAETFGVERKKVPLTTDWQLDLPSIEANLDRVKLVFVCSPNNPTGNLVKRADIIKLLEMTQDRAIVVMDEAYIDFCPEASTVDLLAQYPNLAILRTLSKAFALAGLRCGFTLANAELINVLLKVIAPYPVPVPVAEIAVQALSPAGLARAKYQVLDLGANRAYLQVGLSMVPGVQVFEGWGNYLLVKFPDGDALFKAAWEHGIILRNSPIENCVRISVGNREECEKTVAFIRNYYQ</sequence>
<organism>
    <name type="scientific">Vibrio cholerae serotype O1 (strain M66-2)</name>
    <dbReference type="NCBI Taxonomy" id="579112"/>
    <lineage>
        <taxon>Bacteria</taxon>
        <taxon>Pseudomonadati</taxon>
        <taxon>Pseudomonadota</taxon>
        <taxon>Gammaproteobacteria</taxon>
        <taxon>Vibrionales</taxon>
        <taxon>Vibrionaceae</taxon>
        <taxon>Vibrio</taxon>
    </lineage>
</organism>
<gene>
    <name evidence="1" type="primary">hisC</name>
    <name type="ordered locus">VCM66_1090</name>
</gene>
<proteinExistence type="inferred from homology"/>